<dbReference type="EC" id="2.7.4.22" evidence="1"/>
<dbReference type="EMBL" id="AE001439">
    <property type="protein sequence ID" value="AAD06289.1"/>
    <property type="molecule type" value="Genomic_DNA"/>
</dbReference>
<dbReference type="PIR" id="E71898">
    <property type="entry name" value="E71898"/>
</dbReference>
<dbReference type="RefSeq" id="WP_001148063.1">
    <property type="nucleotide sequence ID" value="NZ_CP011330.1"/>
</dbReference>
<dbReference type="SMR" id="Q9ZL66"/>
<dbReference type="KEGG" id="hpj:jhp_0714"/>
<dbReference type="PATRIC" id="fig|85963.30.peg.263"/>
<dbReference type="eggNOG" id="COG0528">
    <property type="taxonomic scope" value="Bacteria"/>
</dbReference>
<dbReference type="UniPathway" id="UPA00159">
    <property type="reaction ID" value="UER00275"/>
</dbReference>
<dbReference type="Proteomes" id="UP000000804">
    <property type="component" value="Chromosome"/>
</dbReference>
<dbReference type="GO" id="GO:0005829">
    <property type="term" value="C:cytosol"/>
    <property type="evidence" value="ECO:0007669"/>
    <property type="project" value="TreeGrafter"/>
</dbReference>
<dbReference type="GO" id="GO:0005524">
    <property type="term" value="F:ATP binding"/>
    <property type="evidence" value="ECO:0007669"/>
    <property type="project" value="UniProtKB-KW"/>
</dbReference>
<dbReference type="GO" id="GO:0033862">
    <property type="term" value="F:UMP kinase activity"/>
    <property type="evidence" value="ECO:0007669"/>
    <property type="project" value="UniProtKB-EC"/>
</dbReference>
<dbReference type="GO" id="GO:0044210">
    <property type="term" value="P:'de novo' CTP biosynthetic process"/>
    <property type="evidence" value="ECO:0007669"/>
    <property type="project" value="UniProtKB-UniRule"/>
</dbReference>
<dbReference type="GO" id="GO:0006225">
    <property type="term" value="P:UDP biosynthetic process"/>
    <property type="evidence" value="ECO:0007669"/>
    <property type="project" value="TreeGrafter"/>
</dbReference>
<dbReference type="CDD" id="cd04254">
    <property type="entry name" value="AAK_UMPK-PyrH-Ec"/>
    <property type="match status" value="1"/>
</dbReference>
<dbReference type="FunFam" id="3.40.1160.10:FF:000001">
    <property type="entry name" value="Uridylate kinase"/>
    <property type="match status" value="1"/>
</dbReference>
<dbReference type="Gene3D" id="3.40.1160.10">
    <property type="entry name" value="Acetylglutamate kinase-like"/>
    <property type="match status" value="1"/>
</dbReference>
<dbReference type="HAMAP" id="MF_01220_B">
    <property type="entry name" value="PyrH_B"/>
    <property type="match status" value="1"/>
</dbReference>
<dbReference type="InterPro" id="IPR036393">
    <property type="entry name" value="AceGlu_kinase-like_sf"/>
</dbReference>
<dbReference type="InterPro" id="IPR001048">
    <property type="entry name" value="Asp/Glu/Uridylate_kinase"/>
</dbReference>
<dbReference type="InterPro" id="IPR011817">
    <property type="entry name" value="Uridylate_kinase"/>
</dbReference>
<dbReference type="InterPro" id="IPR015963">
    <property type="entry name" value="Uridylate_kinase_bac"/>
</dbReference>
<dbReference type="NCBIfam" id="TIGR02075">
    <property type="entry name" value="pyrH_bact"/>
    <property type="match status" value="1"/>
</dbReference>
<dbReference type="PANTHER" id="PTHR42833">
    <property type="entry name" value="URIDYLATE KINASE"/>
    <property type="match status" value="1"/>
</dbReference>
<dbReference type="PANTHER" id="PTHR42833:SF4">
    <property type="entry name" value="URIDYLATE KINASE PUMPKIN, CHLOROPLASTIC"/>
    <property type="match status" value="1"/>
</dbReference>
<dbReference type="Pfam" id="PF00696">
    <property type="entry name" value="AA_kinase"/>
    <property type="match status" value="1"/>
</dbReference>
<dbReference type="PIRSF" id="PIRSF005650">
    <property type="entry name" value="Uridylate_kin"/>
    <property type="match status" value="1"/>
</dbReference>
<dbReference type="SUPFAM" id="SSF53633">
    <property type="entry name" value="Carbamate kinase-like"/>
    <property type="match status" value="1"/>
</dbReference>
<gene>
    <name evidence="1" type="primary">pyrH</name>
    <name type="ordered locus">jhp_0714</name>
</gene>
<reference key="1">
    <citation type="journal article" date="1999" name="Nature">
        <title>Genomic sequence comparison of two unrelated isolates of the human gastric pathogen Helicobacter pylori.</title>
        <authorList>
            <person name="Alm R.A."/>
            <person name="Ling L.-S.L."/>
            <person name="Moir D.T."/>
            <person name="King B.L."/>
            <person name="Brown E.D."/>
            <person name="Doig P.C."/>
            <person name="Smith D.R."/>
            <person name="Noonan B."/>
            <person name="Guild B.C."/>
            <person name="deJonge B.L."/>
            <person name="Carmel G."/>
            <person name="Tummino P.J."/>
            <person name="Caruso A."/>
            <person name="Uria-Nickelsen M."/>
            <person name="Mills D.M."/>
            <person name="Ives C."/>
            <person name="Gibson R."/>
            <person name="Merberg D."/>
            <person name="Mills S.D."/>
            <person name="Jiang Q."/>
            <person name="Taylor D.E."/>
            <person name="Vovis G.F."/>
            <person name="Trust T.J."/>
        </authorList>
    </citation>
    <scope>NUCLEOTIDE SEQUENCE [LARGE SCALE GENOMIC DNA]</scope>
    <source>
        <strain>J99 / ATCC 700824</strain>
    </source>
</reference>
<feature type="chain" id="PRO_0000143849" description="Uridylate kinase">
    <location>
        <begin position="1"/>
        <end position="240"/>
    </location>
</feature>
<feature type="binding site" evidence="1">
    <location>
        <begin position="13"/>
        <end position="16"/>
    </location>
    <ligand>
        <name>ATP</name>
        <dbReference type="ChEBI" id="CHEBI:30616"/>
    </ligand>
</feature>
<feature type="binding site" evidence="1">
    <location>
        <position position="55"/>
    </location>
    <ligand>
        <name>UMP</name>
        <dbReference type="ChEBI" id="CHEBI:57865"/>
    </ligand>
</feature>
<feature type="binding site" evidence="1">
    <location>
        <position position="56"/>
    </location>
    <ligand>
        <name>ATP</name>
        <dbReference type="ChEBI" id="CHEBI:30616"/>
    </ligand>
</feature>
<feature type="binding site" evidence="1">
    <location>
        <position position="60"/>
    </location>
    <ligand>
        <name>ATP</name>
        <dbReference type="ChEBI" id="CHEBI:30616"/>
    </ligand>
</feature>
<feature type="binding site" evidence="1">
    <location>
        <position position="76"/>
    </location>
    <ligand>
        <name>UMP</name>
        <dbReference type="ChEBI" id="CHEBI:57865"/>
    </ligand>
</feature>
<feature type="binding site" evidence="1">
    <location>
        <begin position="137"/>
        <end position="144"/>
    </location>
    <ligand>
        <name>UMP</name>
        <dbReference type="ChEBI" id="CHEBI:57865"/>
    </ligand>
</feature>
<feature type="binding site" evidence="1">
    <location>
        <position position="164"/>
    </location>
    <ligand>
        <name>ATP</name>
        <dbReference type="ChEBI" id="CHEBI:30616"/>
    </ligand>
</feature>
<feature type="binding site" evidence="1">
    <location>
        <position position="170"/>
    </location>
    <ligand>
        <name>ATP</name>
        <dbReference type="ChEBI" id="CHEBI:30616"/>
    </ligand>
</feature>
<feature type="binding site" evidence="1">
    <location>
        <position position="173"/>
    </location>
    <ligand>
        <name>ATP</name>
        <dbReference type="ChEBI" id="CHEBI:30616"/>
    </ligand>
</feature>
<organism>
    <name type="scientific">Helicobacter pylori (strain J99 / ATCC 700824)</name>
    <name type="common">Campylobacter pylori J99</name>
    <dbReference type="NCBI Taxonomy" id="85963"/>
    <lineage>
        <taxon>Bacteria</taxon>
        <taxon>Pseudomonadati</taxon>
        <taxon>Campylobacterota</taxon>
        <taxon>Epsilonproteobacteria</taxon>
        <taxon>Campylobacterales</taxon>
        <taxon>Helicobacteraceae</taxon>
        <taxon>Helicobacter</taxon>
    </lineage>
</organism>
<protein>
    <recommendedName>
        <fullName evidence="1">Uridylate kinase</fullName>
        <shortName evidence="1">UK</shortName>
        <ecNumber evidence="1">2.7.4.22</ecNumber>
    </recommendedName>
    <alternativeName>
        <fullName evidence="1">Uridine monophosphate kinase</fullName>
        <shortName evidence="1">UMP kinase</shortName>
        <shortName evidence="1">UMPK</shortName>
    </alternativeName>
</protein>
<evidence type="ECO:0000255" key="1">
    <source>
        <dbReference type="HAMAP-Rule" id="MF_01220"/>
    </source>
</evidence>
<sequence>MQAKIKNKRVLVKFSGEALAGDNQFGIDIHVLDHIAKEIRSLVENDIEVGIVIGGGNIIRGVSAAQGGIIRRTSGDYMGMLATVINAVAMQEALEHIGLDTRVQSAIEIKEICESYIYRKAIRHLEKGRVVIFGAGTGNPFFTTDTAATLRAIEIGSDLIIKATKVDGIYDKDPNKFKDAKKLDTLSYNDALIGDIEVMDDTAISLAKDNKLPIVVCNMFKKGNLLQVIKHQQGVFSMVK</sequence>
<name>PYRH_HELPJ</name>
<comment type="function">
    <text evidence="1">Catalyzes the reversible phosphorylation of UMP to UDP.</text>
</comment>
<comment type="catalytic activity">
    <reaction evidence="1">
        <text>UMP + ATP = UDP + ADP</text>
        <dbReference type="Rhea" id="RHEA:24400"/>
        <dbReference type="ChEBI" id="CHEBI:30616"/>
        <dbReference type="ChEBI" id="CHEBI:57865"/>
        <dbReference type="ChEBI" id="CHEBI:58223"/>
        <dbReference type="ChEBI" id="CHEBI:456216"/>
        <dbReference type="EC" id="2.7.4.22"/>
    </reaction>
</comment>
<comment type="activity regulation">
    <text evidence="1">Inhibited by UTP.</text>
</comment>
<comment type="pathway">
    <text evidence="1">Pyrimidine metabolism; CTP biosynthesis via de novo pathway; UDP from UMP (UMPK route): step 1/1.</text>
</comment>
<comment type="subunit">
    <text evidence="1">Homohexamer.</text>
</comment>
<comment type="subcellular location">
    <subcellularLocation>
        <location evidence="1">Cytoplasm</location>
    </subcellularLocation>
</comment>
<comment type="similarity">
    <text evidence="1">Belongs to the UMP kinase family.</text>
</comment>
<proteinExistence type="inferred from homology"/>
<accession>Q9ZL66</accession>
<keyword id="KW-0067">ATP-binding</keyword>
<keyword id="KW-0963">Cytoplasm</keyword>
<keyword id="KW-0418">Kinase</keyword>
<keyword id="KW-0547">Nucleotide-binding</keyword>
<keyword id="KW-0665">Pyrimidine biosynthesis</keyword>
<keyword id="KW-0808">Transferase</keyword>